<feature type="chain" id="PRO_1000083132" description="Protein nucleotidyltransferase YdiU">
    <location>
        <begin position="1"/>
        <end position="473"/>
    </location>
</feature>
<feature type="active site" description="Proton acceptor" evidence="1">
    <location>
        <position position="241"/>
    </location>
</feature>
<feature type="binding site" evidence="1">
    <location>
        <position position="79"/>
    </location>
    <ligand>
        <name>ATP</name>
        <dbReference type="ChEBI" id="CHEBI:30616"/>
    </ligand>
</feature>
<feature type="binding site" evidence="1">
    <location>
        <position position="81"/>
    </location>
    <ligand>
        <name>ATP</name>
        <dbReference type="ChEBI" id="CHEBI:30616"/>
    </ligand>
</feature>
<feature type="binding site" evidence="1">
    <location>
        <position position="82"/>
    </location>
    <ligand>
        <name>ATP</name>
        <dbReference type="ChEBI" id="CHEBI:30616"/>
    </ligand>
</feature>
<feature type="binding site" evidence="1">
    <location>
        <position position="102"/>
    </location>
    <ligand>
        <name>ATP</name>
        <dbReference type="ChEBI" id="CHEBI:30616"/>
    </ligand>
</feature>
<feature type="binding site" evidence="1">
    <location>
        <position position="114"/>
    </location>
    <ligand>
        <name>ATP</name>
        <dbReference type="ChEBI" id="CHEBI:30616"/>
    </ligand>
</feature>
<feature type="binding site" evidence="1">
    <location>
        <position position="115"/>
    </location>
    <ligand>
        <name>ATP</name>
        <dbReference type="ChEBI" id="CHEBI:30616"/>
    </ligand>
</feature>
<feature type="binding site" evidence="1">
    <location>
        <position position="165"/>
    </location>
    <ligand>
        <name>ATP</name>
        <dbReference type="ChEBI" id="CHEBI:30616"/>
    </ligand>
</feature>
<feature type="binding site" evidence="1">
    <location>
        <position position="172"/>
    </location>
    <ligand>
        <name>ATP</name>
        <dbReference type="ChEBI" id="CHEBI:30616"/>
    </ligand>
</feature>
<feature type="binding site" evidence="1">
    <location>
        <position position="242"/>
    </location>
    <ligand>
        <name>Mg(2+)</name>
        <dbReference type="ChEBI" id="CHEBI:18420"/>
    </ligand>
</feature>
<feature type="binding site" evidence="1">
    <location>
        <position position="251"/>
    </location>
    <ligand>
        <name>ATP</name>
        <dbReference type="ChEBI" id="CHEBI:30616"/>
    </ligand>
</feature>
<feature type="binding site" evidence="1">
    <location>
        <position position="251"/>
    </location>
    <ligand>
        <name>Mg(2+)</name>
        <dbReference type="ChEBI" id="CHEBI:18420"/>
    </ligand>
</feature>
<keyword id="KW-0067">ATP-binding</keyword>
<keyword id="KW-0460">Magnesium</keyword>
<keyword id="KW-0464">Manganese</keyword>
<keyword id="KW-0479">Metal-binding</keyword>
<keyword id="KW-0547">Nucleotide-binding</keyword>
<keyword id="KW-0548">Nucleotidyltransferase</keyword>
<keyword id="KW-0808">Transferase</keyword>
<evidence type="ECO:0000255" key="1">
    <source>
        <dbReference type="HAMAP-Rule" id="MF_00692"/>
    </source>
</evidence>
<sequence>MILEHHFASLGHAFSSKTHVQPLIEQRLVEFNQSLASFLSIDIKSTETKCILSGEEALPYSLSMVYAGHQFGGFSPQLGDGRGVLLGEVRGQDGLLYDLHMKGAGPTPYSRRGDGRAVLRSCIREYLASEAMTALSVPSSRALALYDSREAVYRETPEAGAMLLRVAQGHIRFGHFEYFFYQGKQAELDQLIEYCLEHYYPECLATDSPLESMLTEVVKRTARMIAKWQAIGFQHGVMNTDNFSFTGETIDYGPYGFMEDYEPDWVCNHSDHEGRYAFSRQPGVGLWNLNCLMRCFSKHLERDQLIAILQCYEPELQTHYDSLMMSKMGLTSTQDVHELLPALFTILAAEKMDYTVFFRLLSHYEQGEFAFLLDEVIDRERLLAWLERYEVARDKGGLLWSQASASMLAVNPKFILRNYLAHEAIVAAEQGDYLPFRRLLNVLTHPFGEHSESESLAQRAPEWGKSLEVSCSS</sequence>
<gene>
    <name evidence="1" type="primary">ydiU</name>
    <name evidence="1" type="synonym">selO</name>
    <name type="ordered locus">Mmwyl1_2120</name>
</gene>
<dbReference type="EC" id="2.7.7.-" evidence="1"/>
<dbReference type="EC" id="2.7.7.108" evidence="1"/>
<dbReference type="EMBL" id="CP000749">
    <property type="protein sequence ID" value="ABR71042.1"/>
    <property type="molecule type" value="Genomic_DNA"/>
</dbReference>
<dbReference type="SMR" id="A6VX63"/>
<dbReference type="STRING" id="400668.Mmwyl1_2120"/>
<dbReference type="KEGG" id="mmw:Mmwyl1_2120"/>
<dbReference type="eggNOG" id="COG0397">
    <property type="taxonomic scope" value="Bacteria"/>
</dbReference>
<dbReference type="HOGENOM" id="CLU_010245_4_0_6"/>
<dbReference type="OrthoDB" id="9776281at2"/>
<dbReference type="GO" id="GO:0070733">
    <property type="term" value="F:AMPylase activity"/>
    <property type="evidence" value="ECO:0007669"/>
    <property type="project" value="RHEA"/>
</dbReference>
<dbReference type="GO" id="GO:0005524">
    <property type="term" value="F:ATP binding"/>
    <property type="evidence" value="ECO:0007669"/>
    <property type="project" value="UniProtKB-UniRule"/>
</dbReference>
<dbReference type="GO" id="GO:0000287">
    <property type="term" value="F:magnesium ion binding"/>
    <property type="evidence" value="ECO:0007669"/>
    <property type="project" value="UniProtKB-UniRule"/>
</dbReference>
<dbReference type="HAMAP" id="MF_00692">
    <property type="entry name" value="YdiU_SelO"/>
    <property type="match status" value="1"/>
</dbReference>
<dbReference type="InterPro" id="IPR003846">
    <property type="entry name" value="SelO"/>
</dbReference>
<dbReference type="NCBIfam" id="NF000658">
    <property type="entry name" value="PRK00029.1"/>
    <property type="match status" value="1"/>
</dbReference>
<dbReference type="PANTHER" id="PTHR32057">
    <property type="entry name" value="PROTEIN ADENYLYLTRANSFERASE SELO, MITOCHONDRIAL"/>
    <property type="match status" value="1"/>
</dbReference>
<dbReference type="PANTHER" id="PTHR32057:SF14">
    <property type="entry name" value="PROTEIN ADENYLYLTRANSFERASE SELO, MITOCHONDRIAL"/>
    <property type="match status" value="1"/>
</dbReference>
<dbReference type="Pfam" id="PF02696">
    <property type="entry name" value="SelO"/>
    <property type="match status" value="1"/>
</dbReference>
<comment type="function">
    <text evidence="1">Nucleotidyltransferase involved in the post-translational modification of proteins. It can catalyze the addition of adenosine monophosphate (AMP) or uridine monophosphate (UMP) to a protein, resulting in modifications known as AMPylation and UMPylation.</text>
</comment>
<comment type="catalytic activity">
    <reaction evidence="1">
        <text>L-seryl-[protein] + ATP = 3-O-(5'-adenylyl)-L-seryl-[protein] + diphosphate</text>
        <dbReference type="Rhea" id="RHEA:58120"/>
        <dbReference type="Rhea" id="RHEA-COMP:9863"/>
        <dbReference type="Rhea" id="RHEA-COMP:15073"/>
        <dbReference type="ChEBI" id="CHEBI:29999"/>
        <dbReference type="ChEBI" id="CHEBI:30616"/>
        <dbReference type="ChEBI" id="CHEBI:33019"/>
        <dbReference type="ChEBI" id="CHEBI:142516"/>
        <dbReference type="EC" id="2.7.7.108"/>
    </reaction>
</comment>
<comment type="catalytic activity">
    <reaction evidence="1">
        <text>L-threonyl-[protein] + ATP = 3-O-(5'-adenylyl)-L-threonyl-[protein] + diphosphate</text>
        <dbReference type="Rhea" id="RHEA:54292"/>
        <dbReference type="Rhea" id="RHEA-COMP:11060"/>
        <dbReference type="Rhea" id="RHEA-COMP:13847"/>
        <dbReference type="ChEBI" id="CHEBI:30013"/>
        <dbReference type="ChEBI" id="CHEBI:30616"/>
        <dbReference type="ChEBI" id="CHEBI:33019"/>
        <dbReference type="ChEBI" id="CHEBI:138113"/>
        <dbReference type="EC" id="2.7.7.108"/>
    </reaction>
</comment>
<comment type="catalytic activity">
    <reaction evidence="1">
        <text>L-tyrosyl-[protein] + ATP = O-(5'-adenylyl)-L-tyrosyl-[protein] + diphosphate</text>
        <dbReference type="Rhea" id="RHEA:54288"/>
        <dbReference type="Rhea" id="RHEA-COMP:10136"/>
        <dbReference type="Rhea" id="RHEA-COMP:13846"/>
        <dbReference type="ChEBI" id="CHEBI:30616"/>
        <dbReference type="ChEBI" id="CHEBI:33019"/>
        <dbReference type="ChEBI" id="CHEBI:46858"/>
        <dbReference type="ChEBI" id="CHEBI:83624"/>
        <dbReference type="EC" id="2.7.7.108"/>
    </reaction>
</comment>
<comment type="catalytic activity">
    <reaction evidence="1">
        <text>L-histidyl-[protein] + UTP = N(tele)-(5'-uridylyl)-L-histidyl-[protein] + diphosphate</text>
        <dbReference type="Rhea" id="RHEA:83891"/>
        <dbReference type="Rhea" id="RHEA-COMP:9745"/>
        <dbReference type="Rhea" id="RHEA-COMP:20239"/>
        <dbReference type="ChEBI" id="CHEBI:29979"/>
        <dbReference type="ChEBI" id="CHEBI:33019"/>
        <dbReference type="ChEBI" id="CHEBI:46398"/>
        <dbReference type="ChEBI" id="CHEBI:233474"/>
    </reaction>
</comment>
<comment type="catalytic activity">
    <reaction evidence="1">
        <text>L-seryl-[protein] + UTP = O-(5'-uridylyl)-L-seryl-[protein] + diphosphate</text>
        <dbReference type="Rhea" id="RHEA:64604"/>
        <dbReference type="Rhea" id="RHEA-COMP:9863"/>
        <dbReference type="Rhea" id="RHEA-COMP:16635"/>
        <dbReference type="ChEBI" id="CHEBI:29999"/>
        <dbReference type="ChEBI" id="CHEBI:33019"/>
        <dbReference type="ChEBI" id="CHEBI:46398"/>
        <dbReference type="ChEBI" id="CHEBI:156051"/>
    </reaction>
</comment>
<comment type="catalytic activity">
    <reaction evidence="1">
        <text>L-tyrosyl-[protein] + UTP = O-(5'-uridylyl)-L-tyrosyl-[protein] + diphosphate</text>
        <dbReference type="Rhea" id="RHEA:83887"/>
        <dbReference type="Rhea" id="RHEA-COMP:10136"/>
        <dbReference type="Rhea" id="RHEA-COMP:20238"/>
        <dbReference type="ChEBI" id="CHEBI:33019"/>
        <dbReference type="ChEBI" id="CHEBI:46398"/>
        <dbReference type="ChEBI" id="CHEBI:46858"/>
        <dbReference type="ChEBI" id="CHEBI:90602"/>
    </reaction>
</comment>
<comment type="cofactor">
    <cofactor evidence="1">
        <name>Mg(2+)</name>
        <dbReference type="ChEBI" id="CHEBI:18420"/>
    </cofactor>
    <cofactor evidence="1">
        <name>Mn(2+)</name>
        <dbReference type="ChEBI" id="CHEBI:29035"/>
    </cofactor>
</comment>
<comment type="similarity">
    <text evidence="1">Belongs to the SELO family.</text>
</comment>
<name>SELO_MARMS</name>
<proteinExistence type="inferred from homology"/>
<accession>A6VX63</accession>
<organism>
    <name type="scientific">Marinomonas sp. (strain MWYL1)</name>
    <dbReference type="NCBI Taxonomy" id="400668"/>
    <lineage>
        <taxon>Bacteria</taxon>
        <taxon>Pseudomonadati</taxon>
        <taxon>Pseudomonadota</taxon>
        <taxon>Gammaproteobacteria</taxon>
        <taxon>Oceanospirillales</taxon>
        <taxon>Oceanospirillaceae</taxon>
        <taxon>Marinomonas</taxon>
    </lineage>
</organism>
<protein>
    <recommendedName>
        <fullName evidence="1">Protein nucleotidyltransferase YdiU</fullName>
        <ecNumber evidence="1">2.7.7.-</ecNumber>
    </recommendedName>
    <alternativeName>
        <fullName evidence="1">Protein adenylyltransferase YdiU</fullName>
        <ecNumber evidence="1">2.7.7.108</ecNumber>
    </alternativeName>
    <alternativeName>
        <fullName evidence="1">Protein uridylyltransferase YdiU</fullName>
        <ecNumber evidence="1">2.7.7.-</ecNumber>
    </alternativeName>
</protein>
<reference key="1">
    <citation type="submission" date="2007-06" db="EMBL/GenBank/DDBJ databases">
        <title>Complete sequence of Marinomonas sp. MWYL1.</title>
        <authorList>
            <consortium name="US DOE Joint Genome Institute"/>
            <person name="Copeland A."/>
            <person name="Lucas S."/>
            <person name="Lapidus A."/>
            <person name="Barry K."/>
            <person name="Glavina del Rio T."/>
            <person name="Dalin E."/>
            <person name="Tice H."/>
            <person name="Pitluck S."/>
            <person name="Kiss H."/>
            <person name="Brettin T."/>
            <person name="Bruce D."/>
            <person name="Detter J.C."/>
            <person name="Han C."/>
            <person name="Schmutz J."/>
            <person name="Larimer F."/>
            <person name="Land M."/>
            <person name="Hauser L."/>
            <person name="Kyrpides N."/>
            <person name="Kim E."/>
            <person name="Johnston A.W.B."/>
            <person name="Todd J.D."/>
            <person name="Rogers R."/>
            <person name="Wexler M."/>
            <person name="Bond P.L."/>
            <person name="Li Y."/>
            <person name="Richardson P."/>
        </authorList>
    </citation>
    <scope>NUCLEOTIDE SEQUENCE [LARGE SCALE GENOMIC DNA]</scope>
    <source>
        <strain>MWYL1</strain>
    </source>
</reference>